<dbReference type="EMBL" id="CP000352">
    <property type="protein sequence ID" value="ABF09977.1"/>
    <property type="molecule type" value="Genomic_DNA"/>
</dbReference>
<dbReference type="RefSeq" id="WP_008647258.1">
    <property type="nucleotide sequence ID" value="NC_007973.1"/>
</dbReference>
<dbReference type="SMR" id="Q1LIP9"/>
<dbReference type="STRING" id="266264.Rmet_3105"/>
<dbReference type="GeneID" id="60820520"/>
<dbReference type="KEGG" id="rme:Rmet_3105"/>
<dbReference type="eggNOG" id="COG0211">
    <property type="taxonomic scope" value="Bacteria"/>
</dbReference>
<dbReference type="HOGENOM" id="CLU_095424_4_1_4"/>
<dbReference type="Proteomes" id="UP000002429">
    <property type="component" value="Chromosome"/>
</dbReference>
<dbReference type="GO" id="GO:0022625">
    <property type="term" value="C:cytosolic large ribosomal subunit"/>
    <property type="evidence" value="ECO:0007669"/>
    <property type="project" value="TreeGrafter"/>
</dbReference>
<dbReference type="GO" id="GO:0003735">
    <property type="term" value="F:structural constituent of ribosome"/>
    <property type="evidence" value="ECO:0007669"/>
    <property type="project" value="InterPro"/>
</dbReference>
<dbReference type="GO" id="GO:0006412">
    <property type="term" value="P:translation"/>
    <property type="evidence" value="ECO:0007669"/>
    <property type="project" value="UniProtKB-UniRule"/>
</dbReference>
<dbReference type="FunFam" id="2.40.50.100:FF:000001">
    <property type="entry name" value="50S ribosomal protein L27"/>
    <property type="match status" value="1"/>
</dbReference>
<dbReference type="Gene3D" id="2.40.50.100">
    <property type="match status" value="1"/>
</dbReference>
<dbReference type="HAMAP" id="MF_00539">
    <property type="entry name" value="Ribosomal_bL27"/>
    <property type="match status" value="1"/>
</dbReference>
<dbReference type="InterPro" id="IPR001684">
    <property type="entry name" value="Ribosomal_bL27"/>
</dbReference>
<dbReference type="InterPro" id="IPR018261">
    <property type="entry name" value="Ribosomal_bL27_CS"/>
</dbReference>
<dbReference type="NCBIfam" id="TIGR00062">
    <property type="entry name" value="L27"/>
    <property type="match status" value="1"/>
</dbReference>
<dbReference type="PANTHER" id="PTHR15893:SF0">
    <property type="entry name" value="LARGE RIBOSOMAL SUBUNIT PROTEIN BL27M"/>
    <property type="match status" value="1"/>
</dbReference>
<dbReference type="PANTHER" id="PTHR15893">
    <property type="entry name" value="RIBOSOMAL PROTEIN L27"/>
    <property type="match status" value="1"/>
</dbReference>
<dbReference type="Pfam" id="PF01016">
    <property type="entry name" value="Ribosomal_L27"/>
    <property type="match status" value="1"/>
</dbReference>
<dbReference type="PRINTS" id="PR00063">
    <property type="entry name" value="RIBOSOMALL27"/>
</dbReference>
<dbReference type="SUPFAM" id="SSF110324">
    <property type="entry name" value="Ribosomal L27 protein-like"/>
    <property type="match status" value="1"/>
</dbReference>
<dbReference type="PROSITE" id="PS00831">
    <property type="entry name" value="RIBOSOMAL_L27"/>
    <property type="match status" value="1"/>
</dbReference>
<keyword id="KW-1185">Reference proteome</keyword>
<keyword id="KW-0687">Ribonucleoprotein</keyword>
<keyword id="KW-0689">Ribosomal protein</keyword>
<organism>
    <name type="scientific">Cupriavidus metallidurans (strain ATCC 43123 / DSM 2839 / NBRC 102507 / CH34)</name>
    <name type="common">Ralstonia metallidurans</name>
    <dbReference type="NCBI Taxonomy" id="266264"/>
    <lineage>
        <taxon>Bacteria</taxon>
        <taxon>Pseudomonadati</taxon>
        <taxon>Pseudomonadota</taxon>
        <taxon>Betaproteobacteria</taxon>
        <taxon>Burkholderiales</taxon>
        <taxon>Burkholderiaceae</taxon>
        <taxon>Cupriavidus</taxon>
    </lineage>
</organism>
<proteinExistence type="inferred from homology"/>
<accession>Q1LIP9</accession>
<reference key="1">
    <citation type="journal article" date="2010" name="PLoS ONE">
        <title>The complete genome sequence of Cupriavidus metallidurans strain CH34, a master survivalist in harsh and anthropogenic environments.</title>
        <authorList>
            <person name="Janssen P.J."/>
            <person name="Van Houdt R."/>
            <person name="Moors H."/>
            <person name="Monsieurs P."/>
            <person name="Morin N."/>
            <person name="Michaux A."/>
            <person name="Benotmane M.A."/>
            <person name="Leys N."/>
            <person name="Vallaeys T."/>
            <person name="Lapidus A."/>
            <person name="Monchy S."/>
            <person name="Medigue C."/>
            <person name="Taghavi S."/>
            <person name="McCorkle S."/>
            <person name="Dunn J."/>
            <person name="van der Lelie D."/>
            <person name="Mergeay M."/>
        </authorList>
    </citation>
    <scope>NUCLEOTIDE SEQUENCE [LARGE SCALE GENOMIC DNA]</scope>
    <source>
        <strain>ATCC 43123 / DSM 2839 / NBRC 102507 / CH34</strain>
    </source>
</reference>
<evidence type="ECO:0000255" key="1">
    <source>
        <dbReference type="HAMAP-Rule" id="MF_00539"/>
    </source>
</evidence>
<evidence type="ECO:0000305" key="2"/>
<name>RL27_CUPMC</name>
<comment type="similarity">
    <text evidence="1">Belongs to the bacterial ribosomal protein bL27 family.</text>
</comment>
<sequence>MAQKKGGGSTRNGRDSESKRLGVKVFGGQAINAGGIIVRQRGTRVHAGENVGIGKDHTLFALVDGHVQFAVKGAAKKQQVSVVPAA</sequence>
<gene>
    <name evidence="1" type="primary">rpmA</name>
    <name type="ordered locus">Rmet_3105</name>
</gene>
<protein>
    <recommendedName>
        <fullName evidence="1">Large ribosomal subunit protein bL27</fullName>
    </recommendedName>
    <alternativeName>
        <fullName evidence="2">50S ribosomal protein L27</fullName>
    </alternativeName>
</protein>
<feature type="chain" id="PRO_1000017572" description="Large ribosomal subunit protein bL27">
    <location>
        <begin position="1"/>
        <end position="86"/>
    </location>
</feature>